<gene>
    <name type="primary">CATHL4</name>
</gene>
<accession>P33046</accession>
<accession>A3KN14</accession>
<keyword id="KW-0002">3D-structure</keyword>
<keyword id="KW-0027">Amidation</keyword>
<keyword id="KW-0044">Antibiotic</keyword>
<keyword id="KW-0929">Antimicrobial</keyword>
<keyword id="KW-0903">Direct protein sequencing</keyword>
<keyword id="KW-1015">Disulfide bond</keyword>
<keyword id="KW-0295">Fungicide</keyword>
<keyword id="KW-1185">Reference proteome</keyword>
<keyword id="KW-0964">Secreted</keyword>
<keyword id="KW-0732">Signal</keyword>
<protein>
    <recommendedName>
        <fullName>Cathelicidin-4</fullName>
    </recommendedName>
    <alternativeName>
        <fullName>Indolicidin</fullName>
    </alternativeName>
</protein>
<feature type="signal peptide" evidence="2">
    <location>
        <begin position="1"/>
        <end position="29"/>
    </location>
</feature>
<feature type="propeptide" id="PRO_0000004720" evidence="3">
    <location>
        <begin position="30"/>
        <end position="130"/>
    </location>
</feature>
<feature type="peptide" id="PRO_0000004721" description="Cathelicidin-4">
    <location>
        <begin position="131"/>
        <end position="143"/>
    </location>
</feature>
<feature type="modified residue" description="Arginine amide" evidence="3">
    <location>
        <position position="143"/>
    </location>
</feature>
<feature type="disulfide bond" evidence="1">
    <location>
        <begin position="85"/>
        <end position="96"/>
    </location>
</feature>
<feature type="disulfide bond" evidence="1">
    <location>
        <begin position="107"/>
        <end position="124"/>
    </location>
</feature>
<feature type="helix" evidence="5">
    <location>
        <begin position="135"/>
        <end position="142"/>
    </location>
</feature>
<organism>
    <name type="scientific">Bos taurus</name>
    <name type="common">Bovine</name>
    <dbReference type="NCBI Taxonomy" id="9913"/>
    <lineage>
        <taxon>Eukaryota</taxon>
        <taxon>Metazoa</taxon>
        <taxon>Chordata</taxon>
        <taxon>Craniata</taxon>
        <taxon>Vertebrata</taxon>
        <taxon>Euteleostomi</taxon>
        <taxon>Mammalia</taxon>
        <taxon>Eutheria</taxon>
        <taxon>Laurasiatheria</taxon>
        <taxon>Artiodactyla</taxon>
        <taxon>Ruminantia</taxon>
        <taxon>Pecora</taxon>
        <taxon>Bovidae</taxon>
        <taxon>Bovinae</taxon>
        <taxon>Bos</taxon>
    </lineage>
</organism>
<comment type="function">
    <text>Potent microbicidal activity; active against S.aureus and E.coli.</text>
</comment>
<comment type="subcellular location">
    <subcellularLocation>
        <location>Secreted</location>
    </subcellularLocation>
</comment>
<comment type="tissue specificity">
    <text>Large granules of neutrophils.</text>
</comment>
<comment type="PTM">
    <text>Elastase might be responsible for its maturation.</text>
</comment>
<comment type="similarity">
    <text evidence="4">Belongs to the cathelicidin family.</text>
</comment>
<name>CTHL4_BOVIN</name>
<dbReference type="EMBL" id="X67340">
    <property type="protein sequence ID" value="CAA47755.1"/>
    <property type="molecule type" value="mRNA"/>
</dbReference>
<dbReference type="EMBL" id="BC133480">
    <property type="protein sequence ID" value="AAI33481.1"/>
    <property type="molecule type" value="mRNA"/>
</dbReference>
<dbReference type="PIR" id="JC1222">
    <property type="entry name" value="JC1222"/>
</dbReference>
<dbReference type="RefSeq" id="NP_777252.1">
    <property type="nucleotide sequence ID" value="NM_174827.2"/>
</dbReference>
<dbReference type="PDB" id="1G89">
    <property type="method" value="NMR"/>
    <property type="chains" value="A=131-143"/>
</dbReference>
<dbReference type="PDB" id="1G8C">
    <property type="method" value="NMR"/>
    <property type="chains" value="A=131-143"/>
</dbReference>
<dbReference type="PDB" id="1HR1">
    <property type="method" value="NMR"/>
    <property type="chains" value="A=131-143"/>
</dbReference>
<dbReference type="PDB" id="1QX9">
    <property type="method" value="NMR"/>
    <property type="chains" value="A=132-144"/>
</dbReference>
<dbReference type="PDB" id="1QXQ">
    <property type="method" value="NMR"/>
    <property type="chains" value="A=134-144"/>
</dbReference>
<dbReference type="PDB" id="5ZVF">
    <property type="method" value="NMR"/>
    <property type="chains" value="A=131-143"/>
</dbReference>
<dbReference type="PDB" id="5ZVN">
    <property type="method" value="NMR"/>
    <property type="chains" value="A=131-143"/>
</dbReference>
<dbReference type="PDBsum" id="1G89"/>
<dbReference type="PDBsum" id="1G8C"/>
<dbReference type="PDBsum" id="1HR1"/>
<dbReference type="PDBsum" id="1QX9"/>
<dbReference type="PDBsum" id="1QXQ"/>
<dbReference type="PDBsum" id="5ZVF"/>
<dbReference type="PDBsum" id="5ZVN"/>
<dbReference type="SMR" id="P33046"/>
<dbReference type="FunCoup" id="P33046">
    <property type="interactions" value="183"/>
</dbReference>
<dbReference type="STRING" id="9913.ENSBTAP00000026747"/>
<dbReference type="TCDB" id="1.C.33.1.2">
    <property type="family name" value="the cathelicidin (cathelicidin) family"/>
</dbReference>
<dbReference type="PaxDb" id="9913-ENSBTAP00000026747"/>
<dbReference type="PeptideAtlas" id="P33046"/>
<dbReference type="Ensembl" id="ENSBTAT00000026747.6">
    <property type="protein sequence ID" value="ENSBTAP00000026747.4"/>
    <property type="gene ID" value="ENSBTAG00000069042.1"/>
</dbReference>
<dbReference type="GeneID" id="282166"/>
<dbReference type="KEGG" id="bta:282166"/>
<dbReference type="CTD" id="282166"/>
<dbReference type="VEuPathDB" id="HostDB:ENSBTAG00000052903"/>
<dbReference type="VEuPathDB" id="HostDB:ENSBTAG00000053016"/>
<dbReference type="eggNOG" id="ENOG502SAES">
    <property type="taxonomic scope" value="Eukaryota"/>
</dbReference>
<dbReference type="GeneTree" id="ENSGT00390000000410"/>
<dbReference type="HOGENOM" id="CLU_121724_1_1_1"/>
<dbReference type="InParanoid" id="P33046"/>
<dbReference type="OMA" id="METQMAS"/>
<dbReference type="OrthoDB" id="9930485at2759"/>
<dbReference type="TreeFam" id="TF338457"/>
<dbReference type="Reactome" id="R-BTA-6798695">
    <property type="pathway name" value="Neutrophil degranulation"/>
</dbReference>
<dbReference type="Reactome" id="R-BTA-6803157">
    <property type="pathway name" value="Antimicrobial peptides"/>
</dbReference>
<dbReference type="EvolutionaryTrace" id="P33046"/>
<dbReference type="Proteomes" id="UP000009136">
    <property type="component" value="Chromosome 22"/>
</dbReference>
<dbReference type="Bgee" id="ENSBTAG00000052903">
    <property type="expression patterns" value="Expressed in caput epididymis and 23 other cell types or tissues"/>
</dbReference>
<dbReference type="GO" id="GO:0005615">
    <property type="term" value="C:extracellular space"/>
    <property type="evidence" value="ECO:0000318"/>
    <property type="project" value="GO_Central"/>
</dbReference>
<dbReference type="GO" id="GO:0001530">
    <property type="term" value="F:lipopolysaccharide binding"/>
    <property type="evidence" value="ECO:0000318"/>
    <property type="project" value="GO_Central"/>
</dbReference>
<dbReference type="GO" id="GO:0061844">
    <property type="term" value="P:antimicrobial humoral immune response mediated by antimicrobial peptide"/>
    <property type="evidence" value="ECO:0000318"/>
    <property type="project" value="GO_Central"/>
</dbReference>
<dbReference type="GO" id="GO:0050832">
    <property type="term" value="P:defense response to fungus"/>
    <property type="evidence" value="ECO:0007669"/>
    <property type="project" value="UniProtKB-KW"/>
</dbReference>
<dbReference type="GO" id="GO:0050829">
    <property type="term" value="P:defense response to Gram-negative bacterium"/>
    <property type="evidence" value="ECO:0000318"/>
    <property type="project" value="GO_Central"/>
</dbReference>
<dbReference type="GO" id="GO:0050830">
    <property type="term" value="P:defense response to Gram-positive bacterium"/>
    <property type="evidence" value="ECO:0000318"/>
    <property type="project" value="GO_Central"/>
</dbReference>
<dbReference type="GO" id="GO:0045087">
    <property type="term" value="P:innate immune response"/>
    <property type="evidence" value="ECO:0000318"/>
    <property type="project" value="GO_Central"/>
</dbReference>
<dbReference type="GO" id="GO:0031640">
    <property type="term" value="P:killing of cells of another organism"/>
    <property type="evidence" value="ECO:0007669"/>
    <property type="project" value="UniProtKB-KW"/>
</dbReference>
<dbReference type="FunFam" id="3.10.450.10:FF:000003">
    <property type="entry name" value="Cathelicidin antimicrobial peptide"/>
    <property type="match status" value="1"/>
</dbReference>
<dbReference type="Gene3D" id="3.10.450.10">
    <property type="match status" value="1"/>
</dbReference>
<dbReference type="InterPro" id="IPR001894">
    <property type="entry name" value="Cathelicidin-like"/>
</dbReference>
<dbReference type="InterPro" id="IPR018216">
    <property type="entry name" value="Cathelicidin_CS"/>
</dbReference>
<dbReference type="InterPro" id="IPR046350">
    <property type="entry name" value="Cystatin_sf"/>
</dbReference>
<dbReference type="PANTHER" id="PTHR10206">
    <property type="entry name" value="CATHELICIDIN"/>
    <property type="match status" value="1"/>
</dbReference>
<dbReference type="PANTHER" id="PTHR10206:SF2">
    <property type="entry name" value="CATHELICIDIN ANTIMICROBIAL PEPTIDE"/>
    <property type="match status" value="1"/>
</dbReference>
<dbReference type="Pfam" id="PF00666">
    <property type="entry name" value="Cathelicidins"/>
    <property type="match status" value="1"/>
</dbReference>
<dbReference type="SUPFAM" id="SSF54403">
    <property type="entry name" value="Cystatin/monellin"/>
    <property type="match status" value="1"/>
</dbReference>
<dbReference type="PROSITE" id="PS00946">
    <property type="entry name" value="CATHELICIDINS_1"/>
    <property type="match status" value="1"/>
</dbReference>
<dbReference type="PROSITE" id="PS00947">
    <property type="entry name" value="CATHELICIDINS_2"/>
    <property type="match status" value="1"/>
</dbReference>
<proteinExistence type="evidence at protein level"/>
<reference key="1">
    <citation type="journal article" date="1992" name="Biochem. Biophys. Res. Commun.">
        <title>cDNA cloning of the neutrophil bactericidal peptide indolicidin.</title>
        <authorList>
            <person name="del Sal G."/>
            <person name="Storici P."/>
            <person name="Schneider C."/>
            <person name="Romeo D."/>
            <person name="Zanetti M."/>
        </authorList>
    </citation>
    <scope>NUCLEOTIDE SEQUENCE [MRNA]</scope>
    <source>
        <tissue>Bone marrow</tissue>
    </source>
</reference>
<reference key="2">
    <citation type="submission" date="2007-02" db="EMBL/GenBank/DDBJ databases">
        <authorList>
            <consortium name="NIH - Mammalian Gene Collection (MGC) project"/>
        </authorList>
    </citation>
    <scope>NUCLEOTIDE SEQUENCE [LARGE SCALE MRNA]</scope>
    <source>
        <strain>Hereford</strain>
        <tissue>Thymus</tissue>
    </source>
</reference>
<reference key="3">
    <citation type="journal article" date="1992" name="J. Biol. Chem.">
        <title>Indolicidin, a novel bactericidal tridecapeptide amide from neutrophils.</title>
        <authorList>
            <person name="Selsted M.E."/>
            <person name="Novotny M.J."/>
            <person name="Morris W.L."/>
            <person name="Tang Y.-Q."/>
            <person name="Smith W."/>
            <person name="Cullor J.S."/>
        </authorList>
    </citation>
    <scope>PROTEIN SEQUENCE OF 131-143</scope>
    <scope>AMIDATION AT ARG-143</scope>
    <source>
        <tissue>Neutrophil</tissue>
    </source>
</reference>
<reference key="4">
    <citation type="journal article" date="2003" name="Biochem. Biophys. Res. Commun.">
        <title>Fungicidal effect of indolicidin and its interaction with phospholipid membranes.</title>
        <authorList>
            <person name="Lee D.G."/>
            <person name="Kim H.K."/>
            <person name="Kim S.A."/>
            <person name="Park Y."/>
            <person name="Park S.C."/>
            <person name="Jang S.H."/>
            <person name="Hahm K.S."/>
        </authorList>
    </citation>
    <scope>ANTIFUNGAL ACTIVITY</scope>
</reference>
<reference key="5">
    <citation type="journal article" date="2000" name="Biochemistry">
        <title>Structure of the bovine antimicrobial peptide indolicidin bound to dodecylphosphocholine and sodium dodecyl sulfate micelles.</title>
        <authorList>
            <person name="Rozek A."/>
            <person name="Friedrich C.L."/>
            <person name="Hancock R.E."/>
        </authorList>
    </citation>
    <scope>STRUCTURE BY NMR OF 131-144</scope>
</reference>
<evidence type="ECO:0000250" key="1"/>
<evidence type="ECO:0000255" key="2"/>
<evidence type="ECO:0000269" key="3">
    <source>
    </source>
</evidence>
<evidence type="ECO:0000305" key="4"/>
<evidence type="ECO:0007829" key="5">
    <source>
        <dbReference type="PDB" id="1HR1"/>
    </source>
</evidence>
<sequence>MQTQRASLSLGRWSLWLLLLGLVVPSASAQALSYREAVLRAVDQLNELSSEANLYRLLELDPPPKDNEDLGTRKPVSFTVKETVCPRTIQQPAEQCDFKEKGRVKQCVGTVTLDPSNDQFDLNCNELQSVILPWKWPWWPWRRG</sequence>